<comment type="function">
    <text evidence="1">Bifunctional enzyme that catalyzes the oxidative decarboxylation of UDP-glucuronic acid (UDP-GlcUA) to UDP-4-keto-arabinose (UDP-Ara4O) and the addition of a formyl group to UDP-4-amino-4-deoxy-L-arabinose (UDP-L-Ara4N) to form UDP-L-4-formamido-arabinose (UDP-L-Ara4FN). The modified arabinose is attached to lipid A and is required for resistance to polymyxin and cationic antimicrobial peptides.</text>
</comment>
<comment type="catalytic activity">
    <reaction evidence="1">
        <text>UDP-alpha-D-glucuronate + NAD(+) = UDP-beta-L-threo-pentopyranos-4-ulose + CO2 + NADH</text>
        <dbReference type="Rhea" id="RHEA:24702"/>
        <dbReference type="ChEBI" id="CHEBI:16526"/>
        <dbReference type="ChEBI" id="CHEBI:57540"/>
        <dbReference type="ChEBI" id="CHEBI:57945"/>
        <dbReference type="ChEBI" id="CHEBI:58052"/>
        <dbReference type="ChEBI" id="CHEBI:58710"/>
        <dbReference type="EC" id="1.1.1.305"/>
    </reaction>
</comment>
<comment type="catalytic activity">
    <reaction evidence="1">
        <text>UDP-4-amino-4-deoxy-beta-L-arabinose + (6R)-10-formyltetrahydrofolate = UDP-4-deoxy-4-formamido-beta-L-arabinose + (6S)-5,6,7,8-tetrahydrofolate + H(+)</text>
        <dbReference type="Rhea" id="RHEA:24706"/>
        <dbReference type="ChEBI" id="CHEBI:15378"/>
        <dbReference type="ChEBI" id="CHEBI:57453"/>
        <dbReference type="ChEBI" id="CHEBI:58708"/>
        <dbReference type="ChEBI" id="CHEBI:58709"/>
        <dbReference type="ChEBI" id="CHEBI:195366"/>
        <dbReference type="EC" id="2.1.2.13"/>
    </reaction>
</comment>
<comment type="pathway">
    <text evidence="1">Nucleotide-sugar biosynthesis; UDP-4-deoxy-4-formamido-beta-L-arabinose biosynthesis; UDP-4-deoxy-4-formamido-beta-L-arabinose from UDP-alpha-D-glucuronate: step 1/3.</text>
</comment>
<comment type="pathway">
    <text evidence="1">Nucleotide-sugar biosynthesis; UDP-4-deoxy-4-formamido-beta-L-arabinose biosynthesis; UDP-4-deoxy-4-formamido-beta-L-arabinose from UDP-alpha-D-glucuronate: step 3/3.</text>
</comment>
<comment type="pathway">
    <text evidence="1">Bacterial outer membrane biogenesis; lipopolysaccharide biosynthesis.</text>
</comment>
<comment type="subunit">
    <text evidence="1">Homohexamer, formed by a dimer of trimers.</text>
</comment>
<comment type="similarity">
    <text evidence="1">In the N-terminal section; belongs to the Fmt family. UDP-L-Ara4N formyltransferase subfamily.</text>
</comment>
<comment type="similarity">
    <text evidence="1">In the C-terminal section; belongs to the NAD(P)-dependent epimerase/dehydratase family. UDP-glucuronic acid decarboxylase subfamily.</text>
</comment>
<protein>
    <recommendedName>
        <fullName evidence="1">Bifunctional polymyxin resistance protein ArnA</fullName>
    </recommendedName>
    <domain>
        <recommendedName>
            <fullName evidence="1">UDP-4-amino-4-deoxy-L-arabinose formyltransferase</fullName>
            <ecNumber evidence="1">2.1.2.13</ecNumber>
        </recommendedName>
        <alternativeName>
            <fullName evidence="1">ArnAFT</fullName>
        </alternativeName>
        <alternativeName>
            <fullName evidence="1">UDP-L-Ara4N formyltransferase</fullName>
        </alternativeName>
    </domain>
    <domain>
        <recommendedName>
            <fullName evidence="1">UDP-glucuronic acid oxidase, UDP-4-keto-hexauronic acid decarboxylating</fullName>
            <ecNumber evidence="1">1.1.1.305</ecNumber>
        </recommendedName>
        <alternativeName>
            <fullName evidence="1">ArnADH</fullName>
        </alternativeName>
        <alternativeName>
            <fullName evidence="1">UDP-GlcUA decarboxylase</fullName>
        </alternativeName>
        <alternativeName>
            <fullName evidence="1">UDP-glucuronic acid dehydrogenase</fullName>
        </alternativeName>
    </domain>
</protein>
<proteinExistence type="inferred from homology"/>
<accession>A4TIM4</accession>
<organism>
    <name type="scientific">Yersinia pestis (strain Pestoides F)</name>
    <dbReference type="NCBI Taxonomy" id="386656"/>
    <lineage>
        <taxon>Bacteria</taxon>
        <taxon>Pseudomonadati</taxon>
        <taxon>Pseudomonadota</taxon>
        <taxon>Gammaproteobacteria</taxon>
        <taxon>Enterobacterales</taxon>
        <taxon>Yersiniaceae</taxon>
        <taxon>Yersinia</taxon>
    </lineage>
</organism>
<feature type="chain" id="PRO_1000065681" description="Bifunctional polymyxin resistance protein ArnA">
    <location>
        <begin position="1"/>
        <end position="667"/>
    </location>
</feature>
<feature type="region of interest" description="Formyltransferase ArnAFT">
    <location>
        <begin position="1"/>
        <end position="304"/>
    </location>
</feature>
<feature type="region of interest" description="Dehydrogenase ArnADH">
    <location>
        <begin position="314"/>
        <end position="667"/>
    </location>
</feature>
<feature type="active site" description="Proton donor; for formyltransferase activity" evidence="1">
    <location>
        <position position="104"/>
    </location>
</feature>
<feature type="active site" description="Proton acceptor; for decarboxylase activity" evidence="1">
    <location>
        <position position="434"/>
    </location>
</feature>
<feature type="active site" description="Proton donor; for decarboxylase activity" evidence="1">
    <location>
        <position position="619"/>
    </location>
</feature>
<feature type="binding site" evidence="1">
    <location>
        <position position="114"/>
    </location>
    <ligand>
        <name>(6R)-10-formyltetrahydrofolate</name>
        <dbReference type="ChEBI" id="CHEBI:195366"/>
    </ligand>
</feature>
<feature type="binding site" evidence="1">
    <location>
        <begin position="136"/>
        <end position="140"/>
    </location>
    <ligand>
        <name>(6R)-10-formyltetrahydrofolate</name>
        <dbReference type="ChEBI" id="CHEBI:195366"/>
    </ligand>
</feature>
<feature type="binding site" evidence="1">
    <location>
        <position position="347"/>
    </location>
    <ligand>
        <name>NAD(+)</name>
        <dbReference type="ChEBI" id="CHEBI:57540"/>
    </ligand>
</feature>
<feature type="binding site" evidence="1">
    <location>
        <begin position="368"/>
        <end position="369"/>
    </location>
    <ligand>
        <name>NAD(+)</name>
        <dbReference type="ChEBI" id="CHEBI:57540"/>
    </ligand>
</feature>
<feature type="binding site" evidence="1">
    <location>
        <position position="393"/>
    </location>
    <ligand>
        <name>UDP-alpha-D-glucuronate</name>
        <dbReference type="ChEBI" id="CHEBI:58052"/>
    </ligand>
</feature>
<feature type="binding site" evidence="1">
    <location>
        <position position="398"/>
    </location>
    <ligand>
        <name>UDP-alpha-D-glucuronate</name>
        <dbReference type="ChEBI" id="CHEBI:58052"/>
    </ligand>
</feature>
<feature type="binding site" evidence="1">
    <location>
        <begin position="432"/>
        <end position="433"/>
    </location>
    <ligand>
        <name>UDP-alpha-D-glucuronate</name>
        <dbReference type="ChEBI" id="CHEBI:58052"/>
    </ligand>
</feature>
<feature type="binding site" evidence="1">
    <location>
        <position position="460"/>
    </location>
    <ligand>
        <name>UDP-alpha-D-glucuronate</name>
        <dbReference type="ChEBI" id="CHEBI:58052"/>
    </ligand>
</feature>
<feature type="binding site" evidence="1">
    <location>
        <position position="492"/>
    </location>
    <ligand>
        <name>UDP-alpha-D-glucuronate</name>
        <dbReference type="ChEBI" id="CHEBI:58052"/>
    </ligand>
</feature>
<feature type="binding site" evidence="1">
    <location>
        <begin position="526"/>
        <end position="535"/>
    </location>
    <ligand>
        <name>UDP-alpha-D-glucuronate</name>
        <dbReference type="ChEBI" id="CHEBI:58052"/>
    </ligand>
</feature>
<feature type="binding site" evidence="1">
    <location>
        <position position="613"/>
    </location>
    <ligand>
        <name>UDP-alpha-D-glucuronate</name>
        <dbReference type="ChEBI" id="CHEBI:58052"/>
    </ligand>
</feature>
<feature type="site" description="Transition state stabilizer" evidence="1">
    <location>
        <position position="102"/>
    </location>
</feature>
<feature type="site" description="Raises pKa of active site His" evidence="1">
    <location>
        <position position="140"/>
    </location>
</feature>
<dbReference type="EC" id="2.1.2.13" evidence="1"/>
<dbReference type="EC" id="1.1.1.305" evidence="1"/>
<dbReference type="EMBL" id="CP000668">
    <property type="protein sequence ID" value="ABP39136.1"/>
    <property type="molecule type" value="Genomic_DNA"/>
</dbReference>
<dbReference type="RefSeq" id="WP_002211823.1">
    <property type="nucleotide sequence ID" value="NZ_CP009715.1"/>
</dbReference>
<dbReference type="SMR" id="A4TIM4"/>
<dbReference type="GeneID" id="57976257"/>
<dbReference type="KEGG" id="ypp:YPDSF_0730"/>
<dbReference type="PATRIC" id="fig|386656.14.peg.3139"/>
<dbReference type="UniPathway" id="UPA00030"/>
<dbReference type="UniPathway" id="UPA00032">
    <property type="reaction ID" value="UER00492"/>
</dbReference>
<dbReference type="UniPathway" id="UPA00032">
    <property type="reaction ID" value="UER00494"/>
</dbReference>
<dbReference type="GO" id="GO:0016020">
    <property type="term" value="C:membrane"/>
    <property type="evidence" value="ECO:0007669"/>
    <property type="project" value="GOC"/>
</dbReference>
<dbReference type="GO" id="GO:0016831">
    <property type="term" value="F:carboxy-lyase activity"/>
    <property type="evidence" value="ECO:0007669"/>
    <property type="project" value="InterPro"/>
</dbReference>
<dbReference type="GO" id="GO:0099619">
    <property type="term" value="F:UDP-4-amino-4-deoxy-L-arabinose formyltransferase activity"/>
    <property type="evidence" value="ECO:0007669"/>
    <property type="project" value="UniProtKB-EC"/>
</dbReference>
<dbReference type="GO" id="GO:0099618">
    <property type="term" value="F:UDP-glucuronate dehydrogenase activity"/>
    <property type="evidence" value="ECO:0007669"/>
    <property type="project" value="UniProtKB-EC"/>
</dbReference>
<dbReference type="GO" id="GO:0009245">
    <property type="term" value="P:lipid A biosynthetic process"/>
    <property type="evidence" value="ECO:0007669"/>
    <property type="project" value="UniProtKB-KW"/>
</dbReference>
<dbReference type="GO" id="GO:0009103">
    <property type="term" value="P:lipopolysaccharide biosynthetic process"/>
    <property type="evidence" value="ECO:0007669"/>
    <property type="project" value="UniProtKB-UniRule"/>
</dbReference>
<dbReference type="GO" id="GO:0046677">
    <property type="term" value="P:response to antibiotic"/>
    <property type="evidence" value="ECO:0007669"/>
    <property type="project" value="UniProtKB-KW"/>
</dbReference>
<dbReference type="CDD" id="cd08702">
    <property type="entry name" value="Arna_FMT_C"/>
    <property type="match status" value="1"/>
</dbReference>
<dbReference type="CDD" id="cd05257">
    <property type="entry name" value="Arna_like_SDR_e"/>
    <property type="match status" value="1"/>
</dbReference>
<dbReference type="FunFam" id="3.40.50.720:FF:000197">
    <property type="entry name" value="Bifunctional polymyxin resistance protein ArnA"/>
    <property type="match status" value="1"/>
</dbReference>
<dbReference type="Gene3D" id="3.40.50.12230">
    <property type="match status" value="1"/>
</dbReference>
<dbReference type="Gene3D" id="3.40.50.720">
    <property type="entry name" value="NAD(P)-binding Rossmann-like Domain"/>
    <property type="match status" value="1"/>
</dbReference>
<dbReference type="HAMAP" id="MF_01166">
    <property type="entry name" value="ArnA"/>
    <property type="match status" value="1"/>
</dbReference>
<dbReference type="InterPro" id="IPR045869">
    <property type="entry name" value="Arna-like_SDR_e"/>
</dbReference>
<dbReference type="InterPro" id="IPR021168">
    <property type="entry name" value="Bifun_polymyxin_resist_ArnA"/>
</dbReference>
<dbReference type="InterPro" id="IPR001509">
    <property type="entry name" value="Epimerase_deHydtase"/>
</dbReference>
<dbReference type="InterPro" id="IPR005793">
    <property type="entry name" value="Formyl_trans_C"/>
</dbReference>
<dbReference type="InterPro" id="IPR002376">
    <property type="entry name" value="Formyl_transf_N"/>
</dbReference>
<dbReference type="InterPro" id="IPR036477">
    <property type="entry name" value="Formyl_transf_N_sf"/>
</dbReference>
<dbReference type="InterPro" id="IPR011034">
    <property type="entry name" value="Formyl_transferase-like_C_sf"/>
</dbReference>
<dbReference type="InterPro" id="IPR050177">
    <property type="entry name" value="Lipid_A_modif_metabolic_enz"/>
</dbReference>
<dbReference type="InterPro" id="IPR036291">
    <property type="entry name" value="NAD(P)-bd_dom_sf"/>
</dbReference>
<dbReference type="NCBIfam" id="NF005414">
    <property type="entry name" value="PRK06988.1"/>
    <property type="match status" value="1"/>
</dbReference>
<dbReference type="NCBIfam" id="NF005998">
    <property type="entry name" value="PRK08125.1"/>
    <property type="match status" value="1"/>
</dbReference>
<dbReference type="NCBIfam" id="NF008872">
    <property type="entry name" value="PRK11908.1"/>
    <property type="match status" value="1"/>
</dbReference>
<dbReference type="PANTHER" id="PTHR43245">
    <property type="entry name" value="BIFUNCTIONAL POLYMYXIN RESISTANCE PROTEIN ARNA"/>
    <property type="match status" value="1"/>
</dbReference>
<dbReference type="PANTHER" id="PTHR43245:SF13">
    <property type="entry name" value="UDP-D-APIOSE_UDP-D-XYLOSE SYNTHASE 2"/>
    <property type="match status" value="1"/>
</dbReference>
<dbReference type="Pfam" id="PF01370">
    <property type="entry name" value="Epimerase"/>
    <property type="match status" value="1"/>
</dbReference>
<dbReference type="Pfam" id="PF02911">
    <property type="entry name" value="Formyl_trans_C"/>
    <property type="match status" value="1"/>
</dbReference>
<dbReference type="Pfam" id="PF00551">
    <property type="entry name" value="Formyl_trans_N"/>
    <property type="match status" value="1"/>
</dbReference>
<dbReference type="PIRSF" id="PIRSF036506">
    <property type="entry name" value="Bifun_polymyxin_resist_ArnA"/>
    <property type="match status" value="1"/>
</dbReference>
<dbReference type="SUPFAM" id="SSF50486">
    <property type="entry name" value="FMT C-terminal domain-like"/>
    <property type="match status" value="1"/>
</dbReference>
<dbReference type="SUPFAM" id="SSF53328">
    <property type="entry name" value="Formyltransferase"/>
    <property type="match status" value="1"/>
</dbReference>
<dbReference type="SUPFAM" id="SSF51735">
    <property type="entry name" value="NAD(P)-binding Rossmann-fold domains"/>
    <property type="match status" value="1"/>
</dbReference>
<evidence type="ECO:0000255" key="1">
    <source>
        <dbReference type="HAMAP-Rule" id="MF_01166"/>
    </source>
</evidence>
<sequence length="667" mass="74921">MKAIVFAYHDIGCVGLNALAEAGYDIQAVFTHTDNPGENRFFSSVARVAADLALPVFAPEDVNHPLWVERIRELQPDIIFSFYYRNMLSDEILSLAPQGGFNLHGSLLPQYRGRAPINWVLVNGETETGVTLHQMVKKADAGPIAGQYKVAISDVDTALTLHAKMRDAAQELLRNLLPRMKEGPLPLTPQKEADASYFGRRTAADGEIHWQKSAFTINNLVRAVTEPYPGAFSYLGQRKLTIWRSRPLDLVHNKLPGTVLSTAPLTVACGEGALEIITGQGEAGLYVQGDRLAQEMGIVTDVRLGNKPSNTLKRRTRVLILGVNGFIGNHLTERLLQDDRYEVYGLDIGSDAISRFLGNPAFHFVEGDISIHSEWIEYHIKKCDVILPLVAIATPIEYTRNPLRVFELDFEENLKIVRDCVKYNKRIVFPSTSEVYGMCDDKEFDEDTSRLIVGPINKQRWIYSVSKQLLDRVIWAYGVKEGLKFTLFRPFNWMGPRLDNLDAARIGSSRAITQLILNLVEGSPIKLVDGGAQKRCFTDIHDGIEALFRIIENRDGCCDGRIINIGNPTNEASIRELAEMLLTSFENHELRDHFPPFAGFKDIESSAYYGKGYQDVEYRTPSIKNARRILHWQPEIAMQQTVTETLDFFLRAAVIEKTAAPKDELNA</sequence>
<reference key="1">
    <citation type="submission" date="2007-02" db="EMBL/GenBank/DDBJ databases">
        <title>Complete sequence of chromosome of Yersinia pestis Pestoides F.</title>
        <authorList>
            <consortium name="US DOE Joint Genome Institute"/>
            <person name="Copeland A."/>
            <person name="Lucas S."/>
            <person name="Lapidus A."/>
            <person name="Barry K."/>
            <person name="Detter J.C."/>
            <person name="Glavina del Rio T."/>
            <person name="Hammon N."/>
            <person name="Israni S."/>
            <person name="Dalin E."/>
            <person name="Tice H."/>
            <person name="Pitluck S."/>
            <person name="Di Bartolo G."/>
            <person name="Chain P."/>
            <person name="Malfatti S."/>
            <person name="Shin M."/>
            <person name="Vergez L."/>
            <person name="Schmutz J."/>
            <person name="Larimer F."/>
            <person name="Land M."/>
            <person name="Hauser L."/>
            <person name="Worsham P."/>
            <person name="Chu M."/>
            <person name="Bearden S."/>
            <person name="Garcia E."/>
            <person name="Richardson P."/>
        </authorList>
    </citation>
    <scope>NUCLEOTIDE SEQUENCE [LARGE SCALE GENOMIC DNA]</scope>
    <source>
        <strain>Pestoides F</strain>
    </source>
</reference>
<name>ARNA_YERPP</name>
<keyword id="KW-0046">Antibiotic resistance</keyword>
<keyword id="KW-0441">Lipid A biosynthesis</keyword>
<keyword id="KW-0444">Lipid biosynthesis</keyword>
<keyword id="KW-0443">Lipid metabolism</keyword>
<keyword id="KW-0448">Lipopolysaccharide biosynthesis</keyword>
<keyword id="KW-0511">Multifunctional enzyme</keyword>
<keyword id="KW-0520">NAD</keyword>
<keyword id="KW-0560">Oxidoreductase</keyword>
<keyword id="KW-0808">Transferase</keyword>
<gene>
    <name evidence="1" type="primary">arnA</name>
    <name type="ordered locus">YPDSF_0730</name>
</gene>